<organism>
    <name type="scientific">Mus musculus</name>
    <name type="common">Mouse</name>
    <dbReference type="NCBI Taxonomy" id="10090"/>
    <lineage>
        <taxon>Eukaryota</taxon>
        <taxon>Metazoa</taxon>
        <taxon>Chordata</taxon>
        <taxon>Craniata</taxon>
        <taxon>Vertebrata</taxon>
        <taxon>Euteleostomi</taxon>
        <taxon>Mammalia</taxon>
        <taxon>Eutheria</taxon>
        <taxon>Euarchontoglires</taxon>
        <taxon>Glires</taxon>
        <taxon>Rodentia</taxon>
        <taxon>Myomorpha</taxon>
        <taxon>Muroidea</taxon>
        <taxon>Muridae</taxon>
        <taxon>Murinae</taxon>
        <taxon>Mus</taxon>
        <taxon>Mus</taxon>
    </lineage>
</organism>
<sequence>MEHSPEEGASPEPSGQPPATDSTRDGGSGVPPAGPGAASEALAVLTSFGRRLLVLVPVYLAGAAGLSVGFVLFGLALYLGWRRVRDGKERSLRAARQLLDDEERITAETLYMSHRELPAWVSFPDVEKAEWLNKIVAQVWPFLGQYMEKLLAETVAPAVRGANPHLQTFTFTRVELGEKPLRIIGVKVHPSQRKDQILLDLNVSYVGDVQIDVEVKKYFCKAGVKGMQLHGVLRVILEPLTGDLPIVGAVSMFFIKRPTLDINWTGMTNLLDIPGLSSLSDTMIMDSIAAFLVLPNRLLVPLVPDLQDVAQLRSPLPRGIIRIHLLAARGLSSKDKYVKGLIEGKSDPYALVRVGTQTFCSRVIDEELNPHWGETYEVIVHEVPGQEIEVEVFDKDPDKDDFLGRMKLDVGKVLQAGVLDNWYPLQGGQGQVHLRLEWLSLLPDAEKLDQVLQWNRGITSRPEPPSAAILVVYLDRAQDLPLKKGNKEPNPMVQLSVQDVTRESKATYSTNSPVWEEAFRFFLQDPRSQELDVQVKDDSRALTLGALTLPLARLLTASELTLDQWFQLSSSGPNSRLYMKLVMRILYLDYSEIRFPTVPGAQDWDRESLETGSSVDAPPRPYHTTPNSHFGTENVLRIHVLEAQDLIAKDRFLGGLVKGKSDPYVKLKVAGKSFRTHVVREDLNPRWNEVFEVIVTSIPGQELEIEVFDKDLDKDDFLGRYKVSLTTVLNSGFLDEWLTLEDVPSGRLHLRLERLTPRPTAAELEEVLQVNSLIQTQKSSELAAALLSVFLERAEDLPLRKGTKPPSPYATITVGETSHKTKTVSQSSAPVWEESASFLIRKPHAESLELQVRGEGTGTLGSVSLPLSELLQEDQLCLDHWFALSGQGQVLMRAQLGILVSQHSGVEAHSHSYSHSHSSSSLNDEPEALGGPTHPASPVLEVRHRLTHGDSPSEAPVGPLGQVKLTVWYHSDEQKLISIIHSCRALRQNGRDLPDPYVSVLLLPDKNRSTKRKTPQKKRTLNPEFNERFEWDLPLDGTLRRKLDVSVKSNSSFMSRERELLGKVQLDLAEIDLSQGAAQWYDLMDDRDKGGS</sequence>
<proteinExistence type="evidence at protein level"/>
<keyword id="KW-0007">Acetylation</keyword>
<keyword id="KW-0025">Alternative splicing</keyword>
<keyword id="KW-0106">Calcium</keyword>
<keyword id="KW-1003">Cell membrane</keyword>
<keyword id="KW-0256">Endoplasmic reticulum</keyword>
<keyword id="KW-0445">Lipid transport</keyword>
<keyword id="KW-0446">Lipid-binding</keyword>
<keyword id="KW-0472">Membrane</keyword>
<keyword id="KW-0479">Metal-binding</keyword>
<keyword id="KW-0597">Phosphoprotein</keyword>
<keyword id="KW-1185">Reference proteome</keyword>
<keyword id="KW-0677">Repeat</keyword>
<keyword id="KW-0812">Transmembrane</keyword>
<keyword id="KW-1133">Transmembrane helix</keyword>
<keyword id="KW-0813">Transport</keyword>
<reference key="1">
    <citation type="journal article" date="2005" name="Science">
        <title>The transcriptional landscape of the mammalian genome.</title>
        <authorList>
            <person name="Carninci P."/>
            <person name="Kasukawa T."/>
            <person name="Katayama S."/>
            <person name="Gough J."/>
            <person name="Frith M.C."/>
            <person name="Maeda N."/>
            <person name="Oyama R."/>
            <person name="Ravasi T."/>
            <person name="Lenhard B."/>
            <person name="Wells C."/>
            <person name="Kodzius R."/>
            <person name="Shimokawa K."/>
            <person name="Bajic V.B."/>
            <person name="Brenner S.E."/>
            <person name="Batalov S."/>
            <person name="Forrest A.R."/>
            <person name="Zavolan M."/>
            <person name="Davis M.J."/>
            <person name="Wilming L.G."/>
            <person name="Aidinis V."/>
            <person name="Allen J.E."/>
            <person name="Ambesi-Impiombato A."/>
            <person name="Apweiler R."/>
            <person name="Aturaliya R.N."/>
            <person name="Bailey T.L."/>
            <person name="Bansal M."/>
            <person name="Baxter L."/>
            <person name="Beisel K.W."/>
            <person name="Bersano T."/>
            <person name="Bono H."/>
            <person name="Chalk A.M."/>
            <person name="Chiu K.P."/>
            <person name="Choudhary V."/>
            <person name="Christoffels A."/>
            <person name="Clutterbuck D.R."/>
            <person name="Crowe M.L."/>
            <person name="Dalla E."/>
            <person name="Dalrymple B.P."/>
            <person name="de Bono B."/>
            <person name="Della Gatta G."/>
            <person name="di Bernardo D."/>
            <person name="Down T."/>
            <person name="Engstrom P."/>
            <person name="Fagiolini M."/>
            <person name="Faulkner G."/>
            <person name="Fletcher C.F."/>
            <person name="Fukushima T."/>
            <person name="Furuno M."/>
            <person name="Futaki S."/>
            <person name="Gariboldi M."/>
            <person name="Georgii-Hemming P."/>
            <person name="Gingeras T.R."/>
            <person name="Gojobori T."/>
            <person name="Green R.E."/>
            <person name="Gustincich S."/>
            <person name="Harbers M."/>
            <person name="Hayashi Y."/>
            <person name="Hensch T.K."/>
            <person name="Hirokawa N."/>
            <person name="Hill D."/>
            <person name="Huminiecki L."/>
            <person name="Iacono M."/>
            <person name="Ikeo K."/>
            <person name="Iwama A."/>
            <person name="Ishikawa T."/>
            <person name="Jakt M."/>
            <person name="Kanapin A."/>
            <person name="Katoh M."/>
            <person name="Kawasawa Y."/>
            <person name="Kelso J."/>
            <person name="Kitamura H."/>
            <person name="Kitano H."/>
            <person name="Kollias G."/>
            <person name="Krishnan S.P."/>
            <person name="Kruger A."/>
            <person name="Kummerfeld S.K."/>
            <person name="Kurochkin I.V."/>
            <person name="Lareau L.F."/>
            <person name="Lazarevic D."/>
            <person name="Lipovich L."/>
            <person name="Liu J."/>
            <person name="Liuni S."/>
            <person name="McWilliam S."/>
            <person name="Madan Babu M."/>
            <person name="Madera M."/>
            <person name="Marchionni L."/>
            <person name="Matsuda H."/>
            <person name="Matsuzawa S."/>
            <person name="Miki H."/>
            <person name="Mignone F."/>
            <person name="Miyake S."/>
            <person name="Morris K."/>
            <person name="Mottagui-Tabar S."/>
            <person name="Mulder N."/>
            <person name="Nakano N."/>
            <person name="Nakauchi H."/>
            <person name="Ng P."/>
            <person name="Nilsson R."/>
            <person name="Nishiguchi S."/>
            <person name="Nishikawa S."/>
            <person name="Nori F."/>
            <person name="Ohara O."/>
            <person name="Okazaki Y."/>
            <person name="Orlando V."/>
            <person name="Pang K.C."/>
            <person name="Pavan W.J."/>
            <person name="Pavesi G."/>
            <person name="Pesole G."/>
            <person name="Petrovsky N."/>
            <person name="Piazza S."/>
            <person name="Reed J."/>
            <person name="Reid J.F."/>
            <person name="Ring B.Z."/>
            <person name="Ringwald M."/>
            <person name="Rost B."/>
            <person name="Ruan Y."/>
            <person name="Salzberg S.L."/>
            <person name="Sandelin A."/>
            <person name="Schneider C."/>
            <person name="Schoenbach C."/>
            <person name="Sekiguchi K."/>
            <person name="Semple C.A."/>
            <person name="Seno S."/>
            <person name="Sessa L."/>
            <person name="Sheng Y."/>
            <person name="Shibata Y."/>
            <person name="Shimada H."/>
            <person name="Shimada K."/>
            <person name="Silva D."/>
            <person name="Sinclair B."/>
            <person name="Sperling S."/>
            <person name="Stupka E."/>
            <person name="Sugiura K."/>
            <person name="Sultana R."/>
            <person name="Takenaka Y."/>
            <person name="Taki K."/>
            <person name="Tammoja K."/>
            <person name="Tan S.L."/>
            <person name="Tang S."/>
            <person name="Taylor M.S."/>
            <person name="Tegner J."/>
            <person name="Teichmann S.A."/>
            <person name="Ueda H.R."/>
            <person name="van Nimwegen E."/>
            <person name="Verardo R."/>
            <person name="Wei C.L."/>
            <person name="Yagi K."/>
            <person name="Yamanishi H."/>
            <person name="Zabarovsky E."/>
            <person name="Zhu S."/>
            <person name="Zimmer A."/>
            <person name="Hide W."/>
            <person name="Bult C."/>
            <person name="Grimmond S.M."/>
            <person name="Teasdale R.D."/>
            <person name="Liu E.T."/>
            <person name="Brusic V."/>
            <person name="Quackenbush J."/>
            <person name="Wahlestedt C."/>
            <person name="Mattick J.S."/>
            <person name="Hume D.A."/>
            <person name="Kai C."/>
            <person name="Sasaki D."/>
            <person name="Tomaru Y."/>
            <person name="Fukuda S."/>
            <person name="Kanamori-Katayama M."/>
            <person name="Suzuki M."/>
            <person name="Aoki J."/>
            <person name="Arakawa T."/>
            <person name="Iida J."/>
            <person name="Imamura K."/>
            <person name="Itoh M."/>
            <person name="Kato T."/>
            <person name="Kawaji H."/>
            <person name="Kawagashira N."/>
            <person name="Kawashima T."/>
            <person name="Kojima M."/>
            <person name="Kondo S."/>
            <person name="Konno H."/>
            <person name="Nakano K."/>
            <person name="Ninomiya N."/>
            <person name="Nishio T."/>
            <person name="Okada M."/>
            <person name="Plessy C."/>
            <person name="Shibata K."/>
            <person name="Shiraki T."/>
            <person name="Suzuki S."/>
            <person name="Tagami M."/>
            <person name="Waki K."/>
            <person name="Watahiki A."/>
            <person name="Okamura-Oho Y."/>
            <person name="Suzuki H."/>
            <person name="Kawai J."/>
            <person name="Hayashizaki Y."/>
        </authorList>
    </citation>
    <scope>NUCLEOTIDE SEQUENCE [LARGE SCALE MRNA] (ISOFORM 2)</scope>
    <scope>NUCLEOTIDE SEQUENCE [LARGE SCALE MRNA] OF 1-632 AND 955-1092 (ISOFORM 1)</scope>
    <source>
        <strain>C57BL/6J</strain>
        <tissue>Bone marrow</tissue>
        <tissue>Retina</tissue>
        <tissue>Small intestine</tissue>
    </source>
</reference>
<reference key="2">
    <citation type="journal article" date="2004" name="Genome Res.">
        <title>The status, quality, and expansion of the NIH full-length cDNA project: the Mammalian Gene Collection (MGC).</title>
        <authorList>
            <consortium name="The MGC Project Team"/>
        </authorList>
    </citation>
    <scope>NUCLEOTIDE SEQUENCE [LARGE SCALE MRNA] (ISOFORM 1)</scope>
    <source>
        <strain>FVB/N</strain>
        <tissue>Salivary gland</tissue>
    </source>
</reference>
<reference key="3">
    <citation type="journal article" date="1999" name="Biochim. Biophys. Acta">
        <title>Cloning and preliminary characterization of a 121 kDa protein with multiple predicted C2 domains.</title>
        <authorList>
            <person name="Morris N.J."/>
            <person name="Ross S.A."/>
            <person name="Neveu J.M."/>
            <person name="Lane W.S."/>
            <person name="Lienhard G.E."/>
        </authorList>
    </citation>
    <scope>NUCLEOTIDE SEQUENCE [MRNA] OF 392-1092 (ISOFORM 1)</scope>
    <source>
        <tissue>Mammary gland</tissue>
    </source>
</reference>
<reference key="4">
    <citation type="journal article" date="2009" name="Proc. Natl. Acad. Sci. U.S.A.">
        <title>The atypical kinase Cdk5 is activated by insulin, regulates the association between GLUT4 and E-Syt1, and modulates glucose transport in 3T3-L1 adipocytes.</title>
        <authorList>
            <person name="Lalioti V."/>
            <person name="Muruais G."/>
            <person name="Dinarina A."/>
            <person name="van Damme J."/>
            <person name="Vandekerckhove J."/>
            <person name="Sandoval I.V."/>
        </authorList>
    </citation>
    <scope>PHOSPHORYLATION AT SER-314</scope>
    <scope>IDENTIFICATION BY MASS SPECTROMETRY</scope>
    <scope>MUTAGENESIS OF SER-314</scope>
    <scope>INTERACTION WITH SLC2A4</scope>
</reference>
<reference key="5">
    <citation type="journal article" date="2010" name="Cell">
        <title>A tissue-specific atlas of mouse protein phosphorylation and expression.</title>
        <authorList>
            <person name="Huttlin E.L."/>
            <person name="Jedrychowski M.P."/>
            <person name="Elias J.E."/>
            <person name="Goswami T."/>
            <person name="Rad R."/>
            <person name="Beausoleil S.A."/>
            <person name="Villen J."/>
            <person name="Haas W."/>
            <person name="Sowa M.E."/>
            <person name="Gygi S.P."/>
        </authorList>
    </citation>
    <scope>PHOSPHORYLATION [LARGE SCALE ANALYSIS] AT SER-951</scope>
    <scope>IDENTIFICATION BY MASS SPECTROMETRY [LARGE SCALE ANALYSIS]</scope>
    <source>
        <tissue>Brain</tissue>
        <tissue>Brown adipose tissue</tissue>
        <tissue>Heart</tissue>
        <tissue>Kidney</tissue>
        <tissue>Liver</tissue>
        <tissue>Lung</tissue>
        <tissue>Pancreas</tissue>
        <tissue>Spleen</tissue>
        <tissue>Testis</tissue>
    </source>
</reference>
<protein>
    <recommendedName>
        <fullName>Extended synaptotagmin-1</fullName>
        <shortName>E-Syt1</shortName>
    </recommendedName>
    <alternativeName>
        <fullName>Membrane-bound C2 domain-containing protein</fullName>
    </alternativeName>
</protein>
<feature type="chain" id="PRO_0000234345" description="Extended synaptotagmin-1">
    <location>
        <begin position="1"/>
        <end position="1092"/>
    </location>
</feature>
<feature type="topological domain" description="Cytoplasmic" evidence="5">
    <location>
        <begin position="1"/>
        <end position="28"/>
    </location>
</feature>
<feature type="transmembrane region" description="Helical" evidence="5">
    <location>
        <begin position="29"/>
        <end position="49"/>
    </location>
</feature>
<feature type="topological domain" description="Lumenal" evidence="5">
    <location>
        <begin position="50"/>
        <end position="52"/>
    </location>
</feature>
<feature type="transmembrane region" description="Helical" evidence="5">
    <location>
        <begin position="53"/>
        <end position="73"/>
    </location>
</feature>
<feature type="topological domain" description="Cytoplasmic" evidence="5">
    <location>
        <begin position="74"/>
        <end position="1092"/>
    </location>
</feature>
<feature type="domain" description="SMP-LTD" evidence="7">
    <location>
        <begin position="125"/>
        <end position="303"/>
    </location>
</feature>
<feature type="domain" description="C2 1" evidence="6">
    <location>
        <begin position="302"/>
        <end position="423"/>
    </location>
</feature>
<feature type="domain" description="C2 2" evidence="6">
    <location>
        <begin position="444"/>
        <end position="570"/>
    </location>
</feature>
<feature type="domain" description="C2 3" evidence="6">
    <location>
        <begin position="616"/>
        <end position="738"/>
    </location>
</feature>
<feature type="domain" description="C2 4" evidence="6">
    <location>
        <begin position="769"/>
        <end position="886"/>
    </location>
</feature>
<feature type="domain" description="C2 5" evidence="6">
    <location>
        <begin position="959"/>
        <end position="1081"/>
    </location>
</feature>
<feature type="region of interest" description="Disordered" evidence="8">
    <location>
        <begin position="1"/>
        <end position="36"/>
    </location>
</feature>
<feature type="region of interest" description="Disordered" evidence="8">
    <location>
        <begin position="604"/>
        <end position="628"/>
    </location>
</feature>
<feature type="region of interest" description="Disordered" evidence="8">
    <location>
        <begin position="909"/>
        <end position="937"/>
    </location>
</feature>
<feature type="region of interest" description="Required for phosphatidylinositol 4,5-bisphosphate-dependent location at the cell membrane" evidence="2">
    <location>
        <begin position="1006"/>
        <end position="1013"/>
    </location>
</feature>
<feature type="compositionally biased region" description="Low complexity" evidence="8">
    <location>
        <begin position="911"/>
        <end position="921"/>
    </location>
</feature>
<feature type="binding site" evidence="2">
    <location>
        <position position="334"/>
    </location>
    <ligand>
        <name>Ca(2+)</name>
        <dbReference type="ChEBI" id="CHEBI:29108"/>
        <label>1</label>
    </ligand>
</feature>
<feature type="binding site" evidence="2">
    <location>
        <position position="335"/>
    </location>
    <ligand>
        <name>Ca(2+)</name>
        <dbReference type="ChEBI" id="CHEBI:29108"/>
        <label>1</label>
    </ligand>
</feature>
<feature type="binding site" evidence="2">
    <location>
        <position position="335"/>
    </location>
    <ligand>
        <name>Ca(2+)</name>
        <dbReference type="ChEBI" id="CHEBI:29108"/>
        <label>2</label>
    </ligand>
</feature>
<feature type="binding site" evidence="2">
    <location>
        <position position="347"/>
    </location>
    <ligand>
        <name>Ca(2+)</name>
        <dbReference type="ChEBI" id="CHEBI:29108"/>
        <label>2</label>
    </ligand>
</feature>
<feature type="binding site" evidence="2">
    <location>
        <position position="394"/>
    </location>
    <ligand>
        <name>Ca(2+)</name>
        <dbReference type="ChEBI" id="CHEBI:29108"/>
        <label>1</label>
    </ligand>
</feature>
<feature type="binding site" evidence="2">
    <location>
        <position position="394"/>
    </location>
    <ligand>
        <name>Ca(2+)</name>
        <dbReference type="ChEBI" id="CHEBI:29108"/>
        <label>2</label>
    </ligand>
</feature>
<feature type="binding site" evidence="2">
    <location>
        <position position="396"/>
    </location>
    <ligand>
        <name>Ca(2+)</name>
        <dbReference type="ChEBI" id="CHEBI:29108"/>
        <label>1</label>
    </ligand>
</feature>
<feature type="binding site" evidence="2">
    <location>
        <position position="396"/>
    </location>
    <ligand>
        <name>Ca(2+)</name>
        <dbReference type="ChEBI" id="CHEBI:29108"/>
        <label>2</label>
    </ligand>
</feature>
<feature type="binding site" evidence="2">
    <location>
        <position position="396"/>
    </location>
    <ligand>
        <name>Ca(2+)</name>
        <dbReference type="ChEBI" id="CHEBI:29108"/>
        <label>3</label>
    </ligand>
</feature>
<feature type="binding site" evidence="2">
    <location>
        <position position="398"/>
    </location>
    <ligand>
        <name>Ca(2+)</name>
        <dbReference type="ChEBI" id="CHEBI:29108"/>
        <label>3</label>
    </ligand>
</feature>
<feature type="binding site" evidence="2">
    <location>
        <position position="400"/>
    </location>
    <ligand>
        <name>Ca(2+)</name>
        <dbReference type="ChEBI" id="CHEBI:29108"/>
        <label>3</label>
    </ligand>
</feature>
<feature type="binding site" evidence="2">
    <location>
        <position position="401"/>
    </location>
    <ligand>
        <name>Ca(2+)</name>
        <dbReference type="ChEBI" id="CHEBI:29108"/>
        <label>1</label>
    </ligand>
</feature>
<feature type="modified residue" description="N-acetylmethionine" evidence="3">
    <location>
        <position position="1"/>
    </location>
</feature>
<feature type="modified residue" description="Phosphoserine; by CDK5" evidence="9">
    <location>
        <position position="314"/>
    </location>
</feature>
<feature type="modified residue" description="N6-acetyllysine" evidence="3">
    <location>
        <position position="804"/>
    </location>
</feature>
<feature type="modified residue" description="Phosphoserine" evidence="3">
    <location>
        <position position="807"/>
    </location>
</feature>
<feature type="modified residue" description="Phosphoserine" evidence="3">
    <location>
        <position position="937"/>
    </location>
</feature>
<feature type="modified residue" description="Phosphoserine" evidence="12">
    <location>
        <position position="951"/>
    </location>
</feature>
<feature type="modified residue" description="Phosphotyrosine" evidence="4">
    <location>
        <position position="997"/>
    </location>
</feature>
<feature type="splice variant" id="VSP_018278" description="In isoform 2." evidence="10">
    <original>VRGEGTGTLGSVSLPLSELLQEDQLCLDHWFALSGQGQVLMR</original>
    <variation>ACFIHLLFLFERGREQRTVFEFEVFGVNSFPPCGNLWATAHS</variation>
    <location>
        <begin position="852"/>
        <end position="893"/>
    </location>
</feature>
<feature type="splice variant" id="VSP_018279" description="In isoform 2." evidence="10">
    <location>
        <begin position="894"/>
        <end position="1092"/>
    </location>
</feature>
<feature type="mutagenesis site" description="Abolished phosphorylation by CDK5." evidence="9">
    <original>S</original>
    <variation>A</variation>
    <location>
        <position position="314"/>
    </location>
</feature>
<feature type="sequence conflict" description="In Ref. 2; BAC32020." evidence="11" ref="2">
    <original>G</original>
    <variation>R</variation>
    <location>
        <position position="385"/>
    </location>
</feature>
<feature type="sequence conflict" description="In Ref. 3; AAD10190." evidence="11" ref="3">
    <original>VFD</original>
    <variation>IQH</variation>
    <location>
        <begin position="392"/>
        <end position="394"/>
    </location>
</feature>
<feature type="sequence conflict" description="In Ref. 3; AAD10189." evidence="11" ref="3">
    <original>APVWEESASFLIR</original>
    <variation>GFGLEAKIRHEGG</variation>
    <location>
        <begin position="829"/>
        <end position="841"/>
    </location>
</feature>
<accession>Q3U7R1</accession>
<accession>Q8C8R1</accession>
<accession>Q91X62</accession>
<accession>Q9CVH0</accession>
<accession>Q9Z1X5</accession>
<accession>Q9Z1X6</accession>
<dbReference type="EMBL" id="AK008224">
    <property type="protein sequence ID" value="BAB25542.1"/>
    <property type="molecule type" value="mRNA"/>
</dbReference>
<dbReference type="EMBL" id="AK044656">
    <property type="protein sequence ID" value="BAC32020.1"/>
    <property type="molecule type" value="mRNA"/>
</dbReference>
<dbReference type="EMBL" id="AK152482">
    <property type="protein sequence ID" value="BAE31254.1"/>
    <property type="molecule type" value="mRNA"/>
</dbReference>
<dbReference type="EMBL" id="AK152554">
    <property type="protein sequence ID" value="BAE31308.1"/>
    <property type="molecule type" value="mRNA"/>
</dbReference>
<dbReference type="EMBL" id="BC011482">
    <property type="protein sequence ID" value="AAH11482.1"/>
    <property type="molecule type" value="mRNA"/>
</dbReference>
<dbReference type="EMBL" id="AF098633">
    <property type="protein sequence ID" value="AAD10189.1"/>
    <property type="molecule type" value="mRNA"/>
</dbReference>
<dbReference type="EMBL" id="AF098634">
    <property type="protein sequence ID" value="AAD10190.1"/>
    <property type="molecule type" value="mRNA"/>
</dbReference>
<dbReference type="CCDS" id="CCDS24280.1">
    <molecule id="Q3U7R1-1"/>
</dbReference>
<dbReference type="RefSeq" id="NP_035973.1">
    <molecule id="Q3U7R1-1"/>
    <property type="nucleotide sequence ID" value="NM_011843.2"/>
</dbReference>
<dbReference type="SMR" id="Q3U7R1"/>
<dbReference type="BioGRID" id="204808">
    <property type="interactions" value="12"/>
</dbReference>
<dbReference type="DIP" id="DIP-48746N"/>
<dbReference type="FunCoup" id="Q3U7R1">
    <property type="interactions" value="2270"/>
</dbReference>
<dbReference type="IntAct" id="Q3U7R1">
    <property type="interactions" value="5"/>
</dbReference>
<dbReference type="MINT" id="Q3U7R1"/>
<dbReference type="STRING" id="10090.ENSMUSP00000026427"/>
<dbReference type="ChEMBL" id="CHEMBL3621032"/>
<dbReference type="GlyGen" id="Q3U7R1">
    <property type="glycosylation" value="1 site, 1 N-linked glycan (1 site)"/>
</dbReference>
<dbReference type="iPTMnet" id="Q3U7R1"/>
<dbReference type="PhosphoSitePlus" id="Q3U7R1"/>
<dbReference type="SwissPalm" id="Q3U7R1"/>
<dbReference type="jPOST" id="Q3U7R1"/>
<dbReference type="PaxDb" id="10090-ENSMUSP00000026427"/>
<dbReference type="PeptideAtlas" id="Q3U7R1"/>
<dbReference type="ProteomicsDB" id="275692">
    <molecule id="Q3U7R1-1"/>
</dbReference>
<dbReference type="ProteomicsDB" id="275693">
    <molecule id="Q3U7R1-2"/>
</dbReference>
<dbReference type="Pumba" id="Q3U7R1"/>
<dbReference type="Antibodypedia" id="3015">
    <property type="antibodies" value="237 antibodies from 32 providers"/>
</dbReference>
<dbReference type="Ensembl" id="ENSMUST00000026427.8">
    <molecule id="Q3U7R1-1"/>
    <property type="protein sequence ID" value="ENSMUSP00000026427.7"/>
    <property type="gene ID" value="ENSMUSG00000025366.9"/>
</dbReference>
<dbReference type="GeneID" id="23943"/>
<dbReference type="KEGG" id="mmu:23943"/>
<dbReference type="UCSC" id="uc007hng.1">
    <molecule id="Q3U7R1-1"/>
    <property type="organism name" value="mouse"/>
</dbReference>
<dbReference type="AGR" id="MGI:1344426"/>
<dbReference type="CTD" id="23344"/>
<dbReference type="MGI" id="MGI:1344426">
    <property type="gene designation" value="Esyt1"/>
</dbReference>
<dbReference type="VEuPathDB" id="HostDB:ENSMUSG00000025366"/>
<dbReference type="eggNOG" id="KOG1012">
    <property type="taxonomic scope" value="Eukaryota"/>
</dbReference>
<dbReference type="GeneTree" id="ENSGT00940000156561"/>
<dbReference type="HOGENOM" id="CLU_012047_0_0_1"/>
<dbReference type="InParanoid" id="Q3U7R1"/>
<dbReference type="OMA" id="KVHPGQS"/>
<dbReference type="OrthoDB" id="1029639at2759"/>
<dbReference type="PhylomeDB" id="Q3U7R1"/>
<dbReference type="TreeFam" id="TF324255"/>
<dbReference type="Reactome" id="R-MMU-9013149">
    <property type="pathway name" value="RAC1 GTPase cycle"/>
</dbReference>
<dbReference type="Reactome" id="R-MMU-9013404">
    <property type="pathway name" value="RAC2 GTPase cycle"/>
</dbReference>
<dbReference type="Reactome" id="R-MMU-9013405">
    <property type="pathway name" value="RHOD GTPase cycle"/>
</dbReference>
<dbReference type="Reactome" id="R-MMU-9013408">
    <property type="pathway name" value="RHOG GTPase cycle"/>
</dbReference>
<dbReference type="Reactome" id="R-MMU-9013423">
    <property type="pathway name" value="RAC3 GTPase cycle"/>
</dbReference>
<dbReference type="Reactome" id="R-MMU-9035034">
    <property type="pathway name" value="RHOF GTPase cycle"/>
</dbReference>
<dbReference type="Reactome" id="R-MMU-9845576">
    <property type="pathway name" value="Glycosphingolipid transport"/>
</dbReference>
<dbReference type="BioGRID-ORCS" id="23943">
    <property type="hits" value="5 hits in 80 CRISPR screens"/>
</dbReference>
<dbReference type="ChiTaRS" id="Esyt1">
    <property type="organism name" value="mouse"/>
</dbReference>
<dbReference type="PRO" id="PR:Q3U7R1"/>
<dbReference type="Proteomes" id="UP000000589">
    <property type="component" value="Chromosome 10"/>
</dbReference>
<dbReference type="RNAct" id="Q3U7R1">
    <property type="molecule type" value="protein"/>
</dbReference>
<dbReference type="Bgee" id="ENSMUSG00000025366">
    <property type="expression patterns" value="Expressed in ectoplacental cone and 112 other cell types or tissues"/>
</dbReference>
<dbReference type="ExpressionAtlas" id="Q3U7R1">
    <property type="expression patterns" value="baseline and differential"/>
</dbReference>
<dbReference type="GO" id="GO:0005789">
    <property type="term" value="C:endoplasmic reticulum membrane"/>
    <property type="evidence" value="ECO:0000250"/>
    <property type="project" value="UniProtKB"/>
</dbReference>
<dbReference type="GO" id="GO:0005886">
    <property type="term" value="C:plasma membrane"/>
    <property type="evidence" value="ECO:0007669"/>
    <property type="project" value="UniProtKB-SubCell"/>
</dbReference>
<dbReference type="GO" id="GO:0042802">
    <property type="term" value="F:identical protein binding"/>
    <property type="evidence" value="ECO:0007669"/>
    <property type="project" value="Ensembl"/>
</dbReference>
<dbReference type="GO" id="GO:0008289">
    <property type="term" value="F:lipid binding"/>
    <property type="evidence" value="ECO:0007669"/>
    <property type="project" value="UniProtKB-KW"/>
</dbReference>
<dbReference type="GO" id="GO:0046872">
    <property type="term" value="F:metal ion binding"/>
    <property type="evidence" value="ECO:0007669"/>
    <property type="project" value="UniProtKB-KW"/>
</dbReference>
<dbReference type="GO" id="GO:0120014">
    <property type="term" value="F:phospholipid transfer activity"/>
    <property type="evidence" value="ECO:0000250"/>
    <property type="project" value="UniProtKB"/>
</dbReference>
<dbReference type="GO" id="GO:0061817">
    <property type="term" value="P:endoplasmic reticulum-plasma membrane tethering"/>
    <property type="evidence" value="ECO:0007669"/>
    <property type="project" value="InterPro"/>
</dbReference>
<dbReference type="GO" id="GO:0120009">
    <property type="term" value="P:intermembrane lipid transfer"/>
    <property type="evidence" value="ECO:0000250"/>
    <property type="project" value="UniProtKB"/>
</dbReference>
<dbReference type="CDD" id="cd08391">
    <property type="entry name" value="C2A_C2C_Synaptotagmin_like"/>
    <property type="match status" value="2"/>
</dbReference>
<dbReference type="CDD" id="cd04050">
    <property type="entry name" value="C2B_Synaptotagmin-like"/>
    <property type="match status" value="2"/>
</dbReference>
<dbReference type="CDD" id="cd04030">
    <property type="entry name" value="C2C_KIAA1228"/>
    <property type="match status" value="1"/>
</dbReference>
<dbReference type="FunFam" id="2.60.40.150:FF:000025">
    <property type="entry name" value="Extended synaptotagmin 2"/>
    <property type="match status" value="1"/>
</dbReference>
<dbReference type="FunFam" id="2.60.40.150:FF:000106">
    <property type="entry name" value="extended synaptotagmin-1 isoform X1"/>
    <property type="match status" value="1"/>
</dbReference>
<dbReference type="FunFam" id="2.60.40.150:FF:000120">
    <property type="entry name" value="extended synaptotagmin-1 isoform X1"/>
    <property type="match status" value="1"/>
</dbReference>
<dbReference type="FunFam" id="2.60.40.150:FF:000124">
    <property type="entry name" value="extended synaptotagmin-1 isoform X1"/>
    <property type="match status" value="1"/>
</dbReference>
<dbReference type="FunFam" id="2.60.40.150:FF:000139">
    <property type="entry name" value="extended synaptotagmin-1 isoform X1"/>
    <property type="match status" value="1"/>
</dbReference>
<dbReference type="Gene3D" id="2.60.40.150">
    <property type="entry name" value="C2 domain"/>
    <property type="match status" value="5"/>
</dbReference>
<dbReference type="InterPro" id="IPR000008">
    <property type="entry name" value="C2_dom"/>
</dbReference>
<dbReference type="InterPro" id="IPR035892">
    <property type="entry name" value="C2_domain_sf"/>
</dbReference>
<dbReference type="InterPro" id="IPR037752">
    <property type="entry name" value="C2C_KIAA1228"/>
</dbReference>
<dbReference type="InterPro" id="IPR037733">
    <property type="entry name" value="Ext_Synaptotagmin_C2A"/>
</dbReference>
<dbReference type="InterPro" id="IPR037749">
    <property type="entry name" value="Ext_Synaptotagmin_C2B"/>
</dbReference>
<dbReference type="InterPro" id="IPR051634">
    <property type="entry name" value="Extended_Synaptotagmin"/>
</dbReference>
<dbReference type="InterPro" id="IPR031468">
    <property type="entry name" value="SMP_LBD"/>
</dbReference>
<dbReference type="InterPro" id="IPR039010">
    <property type="entry name" value="Synaptotagmin_SMP"/>
</dbReference>
<dbReference type="PANTHER" id="PTHR45761:SF3">
    <property type="entry name" value="EXTENDED SYNAPTOTAGMIN-1"/>
    <property type="match status" value="1"/>
</dbReference>
<dbReference type="PANTHER" id="PTHR45761">
    <property type="entry name" value="EXTENDED SYNAPTOTAGMIN-LIKE PROTEIN 2, ISOFORM C"/>
    <property type="match status" value="1"/>
</dbReference>
<dbReference type="Pfam" id="PF00168">
    <property type="entry name" value="C2"/>
    <property type="match status" value="5"/>
</dbReference>
<dbReference type="Pfam" id="PF17047">
    <property type="entry name" value="SMP_LBD"/>
    <property type="match status" value="1"/>
</dbReference>
<dbReference type="PRINTS" id="PR00360">
    <property type="entry name" value="C2DOMAIN"/>
</dbReference>
<dbReference type="SMART" id="SM00239">
    <property type="entry name" value="C2"/>
    <property type="match status" value="5"/>
</dbReference>
<dbReference type="SUPFAM" id="SSF49562">
    <property type="entry name" value="C2 domain (Calcium/lipid-binding domain, CaLB)"/>
    <property type="match status" value="5"/>
</dbReference>
<dbReference type="PROSITE" id="PS50004">
    <property type="entry name" value="C2"/>
    <property type="match status" value="5"/>
</dbReference>
<dbReference type="PROSITE" id="PS51847">
    <property type="entry name" value="SMP"/>
    <property type="match status" value="1"/>
</dbReference>
<evidence type="ECO:0000250" key="1"/>
<evidence type="ECO:0000250" key="2">
    <source>
        <dbReference type="UniProtKB" id="A0FGR8"/>
    </source>
</evidence>
<evidence type="ECO:0000250" key="3">
    <source>
        <dbReference type="UniProtKB" id="Q9BSJ8"/>
    </source>
</evidence>
<evidence type="ECO:0000250" key="4">
    <source>
        <dbReference type="UniProtKB" id="Q9Z1X1"/>
    </source>
</evidence>
<evidence type="ECO:0000255" key="5"/>
<evidence type="ECO:0000255" key="6">
    <source>
        <dbReference type="PROSITE-ProRule" id="PRU00041"/>
    </source>
</evidence>
<evidence type="ECO:0000255" key="7">
    <source>
        <dbReference type="PROSITE-ProRule" id="PRU01194"/>
    </source>
</evidence>
<evidence type="ECO:0000256" key="8">
    <source>
        <dbReference type="SAM" id="MobiDB-lite"/>
    </source>
</evidence>
<evidence type="ECO:0000269" key="9">
    <source>
    </source>
</evidence>
<evidence type="ECO:0000303" key="10">
    <source>
    </source>
</evidence>
<evidence type="ECO:0000305" key="11"/>
<evidence type="ECO:0007744" key="12">
    <source>
    </source>
</evidence>
<gene>
    <name type="primary">Esyt1</name>
    <name type="synonym">Fam62a</name>
    <name type="synonym">Mbc2</name>
</gene>
<name>ESYT1_MOUSE</name>
<comment type="function">
    <text evidence="2 3">Binds calcium (via the C2 domains) and translocates to sites of contact between the endoplasmic reticulum and the cell membrane in response to increased cytosolic calcium levels. Helps tether the endoplasmic reticulum to the cell membrane and promotes the formation of appositions between the endoplasmic reticulum and the cell membrane. Acts as an inhibitor of ADGRD1 G-protein-coupled receptor activity in absence of cytosolic calcium (By similarity). Binds glycerophospholipids in a barrel-like domain and may play a role in cellular lipid transport (By similarity).</text>
</comment>
<comment type="subunit">
    <text evidence="3 9">Interacts with ESYT2 and ESYT3 (By similarity). Interacts with ADGRD1; inhibiting the G-protein-coupled receptor activity of ADGRD1 (By similarity). Interaction with ADGRD1 is abolished when cytosolic calcium increases, relieving ADGRD1 G-protein-coupled receptor activity (By similarity). Interacts (phosphorylated form) with SLC2A4 (PubMed:19255425).</text>
</comment>
<comment type="interaction">
    <interactant intactId="EBI-8398881">
        <id>Q3U7R1</id>
    </interactant>
    <interactant intactId="EBI-7540210">
        <id>P14142</id>
        <label>Slc2a4</label>
    </interactant>
    <organismsDiffer>false</organismsDiffer>
    <experiments>2</experiments>
</comment>
<comment type="subcellular location">
    <subcellularLocation>
        <location evidence="3">Endoplasmic reticulum membrane</location>
        <topology evidence="5">Multi-pass membrane protein</topology>
    </subcellularLocation>
    <subcellularLocation>
        <location evidence="3">Cell membrane</location>
        <topology evidence="3">Peripheral membrane protein</topology>
    </subcellularLocation>
    <text evidence="3">Localizes primarily to the endoplasmic reticulum. Recruited to sites of contact between the endoplasmic reticulum and the cell membrane in response to increased cytosolic calcium levels.</text>
</comment>
<comment type="alternative products">
    <event type="alternative splicing"/>
    <isoform>
        <id>Q3U7R1-1</id>
        <name>1</name>
        <sequence type="displayed"/>
    </isoform>
    <isoform>
        <id>Q3U7R1-2</id>
        <name>2</name>
        <sequence type="described" ref="VSP_018278 VSP_018279"/>
    </isoform>
</comment>
<comment type="domain">
    <text evidence="1">Anchored to the endoplasmic reticulum membrane by a transmembrane hairpin structure; both N-terminus and C-terminus are cytoplasmic.</text>
</comment>
<comment type="domain">
    <text evidence="1">The C2 domains mediate lipid and calcium binding. The N-terminal C2 domain binds calcium ions and is important for calcium-dependent lipid binding and interaction with membranes. Two calcium ions are bound at a high-affinity site and a third calcium ion is bound with lower affinity. May bind up to four calcium ions. In contrast, the second C2 domain apparently does not bind calcium. The third C2 domain mediates interaction with membranes enriched in phosphatidylinositol 4,5-bisphosphate and is required for translocation to the cell membrane in response to increased cytosolic calcium levels (By similarity).</text>
</comment>
<comment type="domain">
    <text evidence="2">The SMP-LTD domain is a barrel-like domain that binds glycerophospholipids in its interior (By similarity).</text>
</comment>
<comment type="PTM">
    <text evidence="9">Phosphorylated on Ser residues in insulin-treated adipocytes (in vitro); this promotes interaction with SLC2A4.</text>
</comment>
<comment type="similarity">
    <text evidence="11">Belongs to the extended synaptotagmin family.</text>
</comment>